<accession>P0CM75</accession>
<accession>Q55WM6</accession>
<accession>Q5KJL9</accession>
<name>STU1_CRYNB</name>
<proteinExistence type="inferred from homology"/>
<feature type="chain" id="PRO_0000410040" description="Protein STU1">
    <location>
        <begin position="1"/>
        <end position="1242"/>
    </location>
</feature>
<feature type="region of interest" description="Disordered" evidence="2">
    <location>
        <begin position="138"/>
        <end position="161"/>
    </location>
</feature>
<feature type="region of interest" description="Disordered" evidence="2">
    <location>
        <begin position="538"/>
        <end position="612"/>
    </location>
</feature>
<feature type="region of interest" description="Disordered" evidence="2">
    <location>
        <begin position="637"/>
        <end position="711"/>
    </location>
</feature>
<feature type="region of interest" description="Disordered" evidence="2">
    <location>
        <begin position="748"/>
        <end position="839"/>
    </location>
</feature>
<feature type="region of interest" description="Disordered" evidence="2">
    <location>
        <begin position="853"/>
        <end position="884"/>
    </location>
</feature>
<feature type="region of interest" description="Disordered" evidence="2">
    <location>
        <begin position="1077"/>
        <end position="1111"/>
    </location>
</feature>
<feature type="compositionally biased region" description="Low complexity" evidence="2">
    <location>
        <begin position="138"/>
        <end position="156"/>
    </location>
</feature>
<feature type="compositionally biased region" description="Low complexity" evidence="2">
    <location>
        <begin position="548"/>
        <end position="567"/>
    </location>
</feature>
<feature type="compositionally biased region" description="Basic and acidic residues" evidence="2">
    <location>
        <begin position="574"/>
        <end position="593"/>
    </location>
</feature>
<feature type="compositionally biased region" description="Low complexity" evidence="2">
    <location>
        <begin position="640"/>
        <end position="660"/>
    </location>
</feature>
<feature type="compositionally biased region" description="Low complexity" evidence="2">
    <location>
        <begin position="701"/>
        <end position="711"/>
    </location>
</feature>
<feature type="compositionally biased region" description="Basic and acidic residues" evidence="2">
    <location>
        <begin position="748"/>
        <end position="767"/>
    </location>
</feature>
<feature type="compositionally biased region" description="Polar residues" evidence="2">
    <location>
        <begin position="802"/>
        <end position="815"/>
    </location>
</feature>
<feature type="compositionally biased region" description="Polar residues" evidence="2">
    <location>
        <begin position="824"/>
        <end position="837"/>
    </location>
</feature>
<feature type="compositionally biased region" description="Polar residues" evidence="2">
    <location>
        <begin position="856"/>
        <end position="871"/>
    </location>
</feature>
<feature type="compositionally biased region" description="Low complexity" evidence="2">
    <location>
        <begin position="1082"/>
        <end position="1104"/>
    </location>
</feature>
<gene>
    <name type="primary">STU1</name>
    <name type="ordered locus">CNBC1130</name>
</gene>
<sequence>MPKTLTESEVEATFAKLKAADPDRKVDIIQFFGLQLEDVEELPASVIDPFLLILPPLIRSPHSLLLSSVLSSFLPYFLPLIPKHPTTHLRLALLQVLPALLEKLNDAKERIHSAAGNAIVILGELSWEAEPPIPASNLNSSGSLKAGSLSSSTATKSKPHETLPHLWERHLKDVLQGKAWRSKVEGMKVLTKMRSKEGAKMGLKAWLGVLVDLLEDGDGNVRDQARETVVELLSPPSTPPAARSEFKRLLVARNVRKTIADDIITRILSGEGSDRSTPAVMNSELGKEEGASRSGAAAPAHSQADDVDIVYVASPQDLEREFHSMLPFFEGKETEENWAPRERSIVRIRGMMKGQAHVKYQAAFIAGLKGGIVLSLRTTVAQQSCYLLKELPEGLGAAFDNFVEFLLPILGKMSGFTKKLIADRSQTAVTSIITHTTVHPRIFINHISSGIQEKNVQIRAYSVNHLKTFLIVHASHAKHQIEATPGLSDTLDAAFRKALADVNPGVREVTRQAFWRYHEVWRSKAEVLMNSLDGQARKQLEKANPRTAASPMPSYASSSSTGAPSSANTKPPSKKMDLKAMLAERRRAVKEAGKQAQETNAGSPRVVSNPVFASPGVQHASITGLPRSSSAVGIARHVETSSPSPVRSPTPSSSATRIRPSPSPERIQSPIQTKIEIDSPLRSRYTSLTPDLARSPPKSPSPSLSPSLGLGESPLRQVLTYPAANGRHSVGEGKRAIPELVEVADNGAEHEVDELTLKEGQKTRDDGNTDQELPPTVQEEVDQVEQSQQFESEPRLEHPEPQQGNTFSTSTSGRVPSTPARSIATGTTASLPNSRNGNIKGEKIISSRLNPEAFQTPLNPKTSALRSSSAIRTPAWKDSPRPEAVTPQMMQKLKERRHERSWWVKRQELLEKASPLKPLTPSPSFAILPDIEALELGAPTLKNLQKIALFCSSHPVRPEPTAEQDEEEKRAFEEEKRVWTGLFDRVMNGVVDFLRPDKDKELLEQGLVVLWEIVQHQWPLVDDTQRLCHGLFRLRESSDAVVLESTNALISLLVQISDPMLLLCNLRSSLDRFLTKHPAPPSSSADNSDPMTSALSQLSLSSSKESPEKRTRNSGYLFGLTSIGMCVLRLSAPVIVSEGPKLGQIVMEAINDPSSIIRQAAHSLLLAIQCVTHDSRKTLAFVPAMSQGQKDLAVYYMAQNGVLEQIGLHKKATSEGEKGREGDRDNMTGELAGLMSRGVIRE</sequence>
<reference key="1">
    <citation type="journal article" date="2005" name="Science">
        <title>The genome of the basidiomycetous yeast and human pathogen Cryptococcus neoformans.</title>
        <authorList>
            <person name="Loftus B.J."/>
            <person name="Fung E."/>
            <person name="Roncaglia P."/>
            <person name="Rowley D."/>
            <person name="Amedeo P."/>
            <person name="Bruno D."/>
            <person name="Vamathevan J."/>
            <person name="Miranda M."/>
            <person name="Anderson I.J."/>
            <person name="Fraser J.A."/>
            <person name="Allen J.E."/>
            <person name="Bosdet I.E."/>
            <person name="Brent M.R."/>
            <person name="Chiu R."/>
            <person name="Doering T.L."/>
            <person name="Donlin M.J."/>
            <person name="D'Souza C.A."/>
            <person name="Fox D.S."/>
            <person name="Grinberg V."/>
            <person name="Fu J."/>
            <person name="Fukushima M."/>
            <person name="Haas B.J."/>
            <person name="Huang J.C."/>
            <person name="Janbon G."/>
            <person name="Jones S.J.M."/>
            <person name="Koo H.L."/>
            <person name="Krzywinski M.I."/>
            <person name="Kwon-Chung K.J."/>
            <person name="Lengeler K.B."/>
            <person name="Maiti R."/>
            <person name="Marra M.A."/>
            <person name="Marra R.E."/>
            <person name="Mathewson C.A."/>
            <person name="Mitchell T.G."/>
            <person name="Pertea M."/>
            <person name="Riggs F.R."/>
            <person name="Salzberg S.L."/>
            <person name="Schein J.E."/>
            <person name="Shvartsbeyn A."/>
            <person name="Shin H."/>
            <person name="Shumway M."/>
            <person name="Specht C.A."/>
            <person name="Suh B.B."/>
            <person name="Tenney A."/>
            <person name="Utterback T.R."/>
            <person name="Wickes B.L."/>
            <person name="Wortman J.R."/>
            <person name="Wye N.H."/>
            <person name="Kronstad J.W."/>
            <person name="Lodge J.K."/>
            <person name="Heitman J."/>
            <person name="Davis R.W."/>
            <person name="Fraser C.M."/>
            <person name="Hyman R.W."/>
        </authorList>
    </citation>
    <scope>NUCLEOTIDE SEQUENCE [LARGE SCALE GENOMIC DNA]</scope>
    <source>
        <strain>B-3501A</strain>
    </source>
</reference>
<keyword id="KW-0131">Cell cycle</keyword>
<keyword id="KW-0132">Cell division</keyword>
<keyword id="KW-0963">Cytoplasm</keyword>
<keyword id="KW-0206">Cytoskeleton</keyword>
<keyword id="KW-0493">Microtubule</keyword>
<keyword id="KW-0498">Mitosis</keyword>
<keyword id="KW-0539">Nucleus</keyword>
<organism>
    <name type="scientific">Cryptococcus neoformans var. neoformans serotype D (strain B-3501A)</name>
    <name type="common">Filobasidiella neoformans</name>
    <dbReference type="NCBI Taxonomy" id="283643"/>
    <lineage>
        <taxon>Eukaryota</taxon>
        <taxon>Fungi</taxon>
        <taxon>Dikarya</taxon>
        <taxon>Basidiomycota</taxon>
        <taxon>Agaricomycotina</taxon>
        <taxon>Tremellomycetes</taxon>
        <taxon>Tremellales</taxon>
        <taxon>Cryptococcaceae</taxon>
        <taxon>Cryptococcus</taxon>
        <taxon>Cryptococcus neoformans species complex</taxon>
    </lineage>
</organism>
<comment type="function">
    <text evidence="1">Microtubule binding protein that promotes the stabilization of dynamic microtubules. Required for mitotic spindle formation (By similarity).</text>
</comment>
<comment type="subunit">
    <text evidence="1">Interacts with microtubules.</text>
</comment>
<comment type="subcellular location">
    <subcellularLocation>
        <location evidence="1">Cytoplasm</location>
        <location evidence="1">Cytoskeleton</location>
    </subcellularLocation>
    <subcellularLocation>
        <location evidence="1">Nucleus</location>
    </subcellularLocation>
    <subcellularLocation>
        <location evidence="1">Cytoplasm</location>
        <location evidence="1">Cytoskeleton</location>
        <location evidence="1">Spindle</location>
    </subcellularLocation>
</comment>
<comment type="similarity">
    <text evidence="3">Belongs to the CLASP family.</text>
</comment>
<protein>
    <recommendedName>
        <fullName>Protein STU1</fullName>
    </recommendedName>
</protein>
<dbReference type="EMBL" id="AAEY01000013">
    <property type="protein sequence ID" value="EAL21973.1"/>
    <property type="molecule type" value="Genomic_DNA"/>
</dbReference>
<dbReference type="RefSeq" id="XP_776620.1">
    <property type="nucleotide sequence ID" value="XM_771527.1"/>
</dbReference>
<dbReference type="GeneID" id="4934777"/>
<dbReference type="KEGG" id="cnb:CNBC1130"/>
<dbReference type="VEuPathDB" id="FungiDB:CNBC1130"/>
<dbReference type="HOGENOM" id="CLU_003840_0_0_1"/>
<dbReference type="OrthoDB" id="7258at5206"/>
<dbReference type="GO" id="GO:0005881">
    <property type="term" value="C:cytoplasmic microtubule"/>
    <property type="evidence" value="ECO:0007669"/>
    <property type="project" value="TreeGrafter"/>
</dbReference>
<dbReference type="GO" id="GO:0005815">
    <property type="term" value="C:microtubule organizing center"/>
    <property type="evidence" value="ECO:0007669"/>
    <property type="project" value="TreeGrafter"/>
</dbReference>
<dbReference type="GO" id="GO:1990023">
    <property type="term" value="C:mitotic spindle midzone"/>
    <property type="evidence" value="ECO:0007669"/>
    <property type="project" value="TreeGrafter"/>
</dbReference>
<dbReference type="GO" id="GO:0005634">
    <property type="term" value="C:nucleus"/>
    <property type="evidence" value="ECO:0007669"/>
    <property type="project" value="UniProtKB-SubCell"/>
</dbReference>
<dbReference type="GO" id="GO:0005876">
    <property type="term" value="C:spindle microtubule"/>
    <property type="evidence" value="ECO:0007669"/>
    <property type="project" value="TreeGrafter"/>
</dbReference>
<dbReference type="GO" id="GO:0008017">
    <property type="term" value="F:microtubule binding"/>
    <property type="evidence" value="ECO:0007669"/>
    <property type="project" value="TreeGrafter"/>
</dbReference>
<dbReference type="GO" id="GO:0051301">
    <property type="term" value="P:cell division"/>
    <property type="evidence" value="ECO:0007669"/>
    <property type="project" value="UniProtKB-KW"/>
</dbReference>
<dbReference type="GO" id="GO:0090307">
    <property type="term" value="P:mitotic spindle assembly"/>
    <property type="evidence" value="ECO:0007669"/>
    <property type="project" value="TreeGrafter"/>
</dbReference>
<dbReference type="Gene3D" id="1.25.10.10">
    <property type="entry name" value="Leucine-rich Repeat Variant"/>
    <property type="match status" value="2"/>
</dbReference>
<dbReference type="InterPro" id="IPR011989">
    <property type="entry name" value="ARM-like"/>
</dbReference>
<dbReference type="InterPro" id="IPR016024">
    <property type="entry name" value="ARM-type_fold"/>
</dbReference>
<dbReference type="InterPro" id="IPR024395">
    <property type="entry name" value="CLASP_N_dom"/>
</dbReference>
<dbReference type="PANTHER" id="PTHR21567">
    <property type="entry name" value="CLASP"/>
    <property type="match status" value="1"/>
</dbReference>
<dbReference type="PANTHER" id="PTHR21567:SF9">
    <property type="entry name" value="CLIP-ASSOCIATING PROTEIN"/>
    <property type="match status" value="1"/>
</dbReference>
<dbReference type="Pfam" id="PF12348">
    <property type="entry name" value="CLASP_N"/>
    <property type="match status" value="1"/>
</dbReference>
<dbReference type="SUPFAM" id="SSF48371">
    <property type="entry name" value="ARM repeat"/>
    <property type="match status" value="1"/>
</dbReference>
<evidence type="ECO:0000250" key="1"/>
<evidence type="ECO:0000256" key="2">
    <source>
        <dbReference type="SAM" id="MobiDB-lite"/>
    </source>
</evidence>
<evidence type="ECO:0000305" key="3"/>